<sequence>MAGKQNQAAPKKAVAPRQQHYEFGGPIGAFGITFGLPILVHVFNLFCNDISGCPAPSLLHPKSLDLAQLKREIGWPDNGVFGLFSWSATLWTLGYYALSLVQYRFLPGHHVEGTELSTGGRLKYKLNAFNSAMCTLAILAAGTIAQGAEFPVWTFISDNFAQIISANILFAFALAIFVYVRSFDVKPGNKDMRQLAAGGVTGSLIYDFYIGRELNPRITLPLIGQVDIKEFMEMRPGLLGWIILNCAFIAKQYRLYGYVTDSILFITAIQAFYVFDGIYMEPAVLTTMDITTDGFGFMLSFGDVVWVPFMYSTQTRYLSVHPQQLGAFGLIAVGAVLAAGYSIFRLSNSQKNNFRTNPEDPSVKHLTYLQTKTGSRLITSGWWGIARHINYLGDWLQSWPYSLPTGIAGYQILSAGSNAPGAITMLDGREVVQGEARGWGIVFTYFYILYFAILLIHRDLRDDEKCSKKYGDDWEKYKKLVKWRIVPGIY</sequence>
<gene>
    <name type="primary">erg-3</name>
    <name type="synonym">erg3</name>
    <name type="ORF">B2G14.010</name>
    <name type="ORF">NCU08762</name>
</gene>
<dbReference type="EC" id="1.3.1.70"/>
<dbReference type="EMBL" id="X77955">
    <property type="protein sequence ID" value="CAA54919.1"/>
    <property type="molecule type" value="Genomic_DNA"/>
</dbReference>
<dbReference type="EMBL" id="BX284753">
    <property type="protein sequence ID" value="CAD70446.1"/>
    <property type="molecule type" value="Genomic_DNA"/>
</dbReference>
<dbReference type="EMBL" id="CM002238">
    <property type="protein sequence ID" value="EAA26875.1"/>
    <property type="molecule type" value="Genomic_DNA"/>
</dbReference>
<dbReference type="PIR" id="S44170">
    <property type="entry name" value="S44170"/>
</dbReference>
<dbReference type="RefSeq" id="XP_956111.1">
    <property type="nucleotide sequence ID" value="XM_951018.2"/>
</dbReference>
<dbReference type="SMR" id="P38670"/>
<dbReference type="FunCoup" id="P38670">
    <property type="interactions" value="461"/>
</dbReference>
<dbReference type="STRING" id="367110.P38670"/>
<dbReference type="PaxDb" id="5141-EFNCRP00000004754"/>
<dbReference type="EnsemblFungi" id="EAA26875">
    <property type="protein sequence ID" value="EAA26875"/>
    <property type="gene ID" value="NCU08762"/>
</dbReference>
<dbReference type="GeneID" id="3872249"/>
<dbReference type="KEGG" id="ncr:NCU08762"/>
<dbReference type="VEuPathDB" id="FungiDB:NCU08762"/>
<dbReference type="HOGENOM" id="CLU_015631_0_3_1"/>
<dbReference type="InParanoid" id="P38670"/>
<dbReference type="OMA" id="EWCELRP"/>
<dbReference type="OrthoDB" id="10262235at2759"/>
<dbReference type="UniPathway" id="UPA00770">
    <property type="reaction ID" value="UER00755"/>
</dbReference>
<dbReference type="Proteomes" id="UP000001805">
    <property type="component" value="Chromosome 3, Linkage Group III"/>
</dbReference>
<dbReference type="GO" id="GO:0005789">
    <property type="term" value="C:endoplasmic reticulum membrane"/>
    <property type="evidence" value="ECO:0000318"/>
    <property type="project" value="GO_Central"/>
</dbReference>
<dbReference type="GO" id="GO:0050613">
    <property type="term" value="F:Delta14-sterol reductase activity"/>
    <property type="evidence" value="ECO:0000318"/>
    <property type="project" value="GO_Central"/>
</dbReference>
<dbReference type="GO" id="GO:0050661">
    <property type="term" value="F:NADP binding"/>
    <property type="evidence" value="ECO:0000250"/>
    <property type="project" value="UniProtKB"/>
</dbReference>
<dbReference type="GO" id="GO:0006696">
    <property type="term" value="P:ergosterol biosynthetic process"/>
    <property type="evidence" value="ECO:0000318"/>
    <property type="project" value="GO_Central"/>
</dbReference>
<dbReference type="Gene3D" id="1.20.120.1630">
    <property type="match status" value="1"/>
</dbReference>
<dbReference type="InterPro" id="IPR001171">
    <property type="entry name" value="ERG24_DHCR-like"/>
</dbReference>
<dbReference type="InterPro" id="IPR018083">
    <property type="entry name" value="Sterol_reductase_CS"/>
</dbReference>
<dbReference type="PANTHER" id="PTHR21257">
    <property type="entry name" value="DELTA(14)-STEROL REDUCTASE"/>
    <property type="match status" value="1"/>
</dbReference>
<dbReference type="PANTHER" id="PTHR21257:SF52">
    <property type="entry name" value="DELTA(14)-STEROL REDUCTASE TM7SF2"/>
    <property type="match status" value="1"/>
</dbReference>
<dbReference type="Pfam" id="PF01222">
    <property type="entry name" value="ERG4_ERG24"/>
    <property type="match status" value="1"/>
</dbReference>
<dbReference type="PROSITE" id="PS01017">
    <property type="entry name" value="STEROL_REDUCT_1"/>
    <property type="match status" value="1"/>
</dbReference>
<dbReference type="PROSITE" id="PS01018">
    <property type="entry name" value="STEROL_REDUCT_2"/>
    <property type="match status" value="1"/>
</dbReference>
<keyword id="KW-0444">Lipid biosynthesis</keyword>
<keyword id="KW-0443">Lipid metabolism</keyword>
<keyword id="KW-0472">Membrane</keyword>
<keyword id="KW-0521">NADP</keyword>
<keyword id="KW-0560">Oxidoreductase</keyword>
<keyword id="KW-1185">Reference proteome</keyword>
<keyword id="KW-0752">Steroid biosynthesis</keyword>
<keyword id="KW-0753">Steroid metabolism</keyword>
<keyword id="KW-0756">Sterol biosynthesis</keyword>
<keyword id="KW-1207">Sterol metabolism</keyword>
<keyword id="KW-0812">Transmembrane</keyword>
<keyword id="KW-1133">Transmembrane helix</keyword>
<name>ERG24_NEUCR</name>
<protein>
    <recommendedName>
        <fullName>Delta(14)-sterol reductase</fullName>
        <ecNumber>1.3.1.70</ecNumber>
    </recommendedName>
    <alternativeName>
        <fullName>C-14 sterol reductase</fullName>
    </alternativeName>
    <alternativeName>
        <fullName>Sterol C14-reductase</fullName>
    </alternativeName>
</protein>
<accession>P38670</accession>
<accession>Q7RV50</accession>
<organism>
    <name type="scientific">Neurospora crassa (strain ATCC 24698 / 74-OR23-1A / CBS 708.71 / DSM 1257 / FGSC 987)</name>
    <dbReference type="NCBI Taxonomy" id="367110"/>
    <lineage>
        <taxon>Eukaryota</taxon>
        <taxon>Fungi</taxon>
        <taxon>Dikarya</taxon>
        <taxon>Ascomycota</taxon>
        <taxon>Pezizomycotina</taxon>
        <taxon>Sordariomycetes</taxon>
        <taxon>Sordariomycetidae</taxon>
        <taxon>Sordariales</taxon>
        <taxon>Sordariaceae</taxon>
        <taxon>Neurospora</taxon>
    </lineage>
</organism>
<feature type="chain" id="PRO_0000207497" description="Delta(14)-sterol reductase">
    <location>
        <begin position="1"/>
        <end position="490"/>
    </location>
</feature>
<feature type="transmembrane region" description="Helical" evidence="2">
    <location>
        <begin position="23"/>
        <end position="43"/>
    </location>
</feature>
<feature type="transmembrane region" description="Helical" evidence="2">
    <location>
        <begin position="80"/>
        <end position="100"/>
    </location>
</feature>
<feature type="transmembrane region" description="Helical" evidence="2">
    <location>
        <begin position="136"/>
        <end position="156"/>
    </location>
</feature>
<feature type="transmembrane region" description="Helical" evidence="2">
    <location>
        <begin position="160"/>
        <end position="180"/>
    </location>
</feature>
<feature type="transmembrane region" description="Helical" evidence="2">
    <location>
        <begin position="230"/>
        <end position="250"/>
    </location>
</feature>
<feature type="transmembrane region" description="Helical" evidence="2">
    <location>
        <begin position="255"/>
        <end position="275"/>
    </location>
</feature>
<feature type="transmembrane region" description="Helical" evidence="2">
    <location>
        <begin position="324"/>
        <end position="344"/>
    </location>
</feature>
<feature type="transmembrane region" description="Helical" evidence="2">
    <location>
        <begin position="436"/>
        <end position="456"/>
    </location>
</feature>
<feature type="binding site" evidence="1">
    <location>
        <position position="351"/>
    </location>
    <ligand>
        <name>NADP(+)</name>
        <dbReference type="ChEBI" id="CHEBI:58349"/>
    </ligand>
</feature>
<feature type="binding site" evidence="1">
    <location>
        <position position="355"/>
    </location>
    <ligand>
        <name>NADP(+)</name>
        <dbReference type="ChEBI" id="CHEBI:58349"/>
    </ligand>
</feature>
<feature type="binding site" evidence="1">
    <location>
        <position position="378"/>
    </location>
    <ligand>
        <name>NADP(+)</name>
        <dbReference type="ChEBI" id="CHEBI:58349"/>
    </ligand>
</feature>
<feature type="binding site" evidence="1">
    <location>
        <position position="383"/>
    </location>
    <ligand>
        <name>NADP(+)</name>
        <dbReference type="ChEBI" id="CHEBI:58349"/>
    </ligand>
</feature>
<feature type="binding site" evidence="1">
    <location>
        <begin position="390"/>
        <end position="391"/>
    </location>
    <ligand>
        <name>NADP(+)</name>
        <dbReference type="ChEBI" id="CHEBI:58349"/>
    </ligand>
</feature>
<feature type="binding site" evidence="1">
    <location>
        <position position="462"/>
    </location>
    <ligand>
        <name>NADP(+)</name>
        <dbReference type="ChEBI" id="CHEBI:58349"/>
    </ligand>
</feature>
<feature type="binding site" evidence="1">
    <location>
        <begin position="466"/>
        <end position="470"/>
    </location>
    <ligand>
        <name>NADP(+)</name>
        <dbReference type="ChEBI" id="CHEBI:58349"/>
    </ligand>
</feature>
<feature type="binding site" evidence="1">
    <location>
        <position position="477"/>
    </location>
    <ligand>
        <name>NADP(+)</name>
        <dbReference type="ChEBI" id="CHEBI:58349"/>
    </ligand>
</feature>
<comment type="function">
    <text>Reduces the C14=C15 double bond of 4,4-dimethyl-cholesta-8,14,24-trienol to produce 4,4-dimethyl-cholesta-8,24-dienol.</text>
</comment>
<comment type="catalytic activity">
    <reaction>
        <text>4,4-dimethyl-5alpha-cholesta-8,24-dien-3beta-ol + NADP(+) = 4,4-dimethyl-5alpha-cholesta-8,14,24-trien-3beta-ol + NADPH + H(+)</text>
        <dbReference type="Rhea" id="RHEA:18561"/>
        <dbReference type="ChEBI" id="CHEBI:15378"/>
        <dbReference type="ChEBI" id="CHEBI:17813"/>
        <dbReference type="ChEBI" id="CHEBI:18364"/>
        <dbReference type="ChEBI" id="CHEBI:57783"/>
        <dbReference type="ChEBI" id="CHEBI:58349"/>
        <dbReference type="EC" id="1.3.1.70"/>
    </reaction>
</comment>
<comment type="pathway">
    <text>Steroid biosynthesis; zymosterol biosynthesis; zymosterol from lanosterol: step 2/6.</text>
</comment>
<comment type="subcellular location">
    <subcellularLocation>
        <location evidence="3">Membrane</location>
        <topology evidence="3">Multi-pass membrane protein</topology>
    </subcellularLocation>
</comment>
<comment type="similarity">
    <text evidence="3">Belongs to the ERG4/ERG24 family.</text>
</comment>
<evidence type="ECO:0000250" key="1">
    <source>
        <dbReference type="UniProtKB" id="G4SW86"/>
    </source>
</evidence>
<evidence type="ECO:0000255" key="2"/>
<evidence type="ECO:0000305" key="3"/>
<proteinExistence type="inferred from homology"/>
<reference key="1">
    <citation type="journal article" date="1994" name="J. Genet.">
        <title>The Neurospora crassa erg3 gene encodes a protein with sequence homology to both yeast sterol C-14 reductase and chicken lamin B receptor.</title>
        <authorList>
            <person name="Papavinasasundaram K.G."/>
            <person name="Kasbekar D.P."/>
        </authorList>
    </citation>
    <scope>NUCLEOTIDE SEQUENCE [GENOMIC DNA]</scope>
    <source>
        <strain>ATCC 24698 / 74-OR23-1A / CBS 708.71 / DSM 1257 / FGSC 987</strain>
    </source>
</reference>
<reference key="2">
    <citation type="journal article" date="2003" name="Nucleic Acids Res.">
        <title>What's in the genome of a filamentous fungus? Analysis of the Neurospora genome sequence.</title>
        <authorList>
            <person name="Mannhaupt G."/>
            <person name="Montrone C."/>
            <person name="Haase D."/>
            <person name="Mewes H.-W."/>
            <person name="Aign V."/>
            <person name="Hoheisel J.D."/>
            <person name="Fartmann B."/>
            <person name="Nyakatura G."/>
            <person name="Kempken F."/>
            <person name="Maier J."/>
            <person name="Schulte U."/>
        </authorList>
    </citation>
    <scope>NUCLEOTIDE SEQUENCE [LARGE SCALE GENOMIC DNA]</scope>
    <source>
        <strain>ATCC 24698 / 74-OR23-1A / CBS 708.71 / DSM 1257 / FGSC 987</strain>
    </source>
</reference>
<reference key="3">
    <citation type="journal article" date="2003" name="Nature">
        <title>The genome sequence of the filamentous fungus Neurospora crassa.</title>
        <authorList>
            <person name="Galagan J.E."/>
            <person name="Calvo S.E."/>
            <person name="Borkovich K.A."/>
            <person name="Selker E.U."/>
            <person name="Read N.D."/>
            <person name="Jaffe D.B."/>
            <person name="FitzHugh W."/>
            <person name="Ma L.-J."/>
            <person name="Smirnov S."/>
            <person name="Purcell S."/>
            <person name="Rehman B."/>
            <person name="Elkins T."/>
            <person name="Engels R."/>
            <person name="Wang S."/>
            <person name="Nielsen C.B."/>
            <person name="Butler J."/>
            <person name="Endrizzi M."/>
            <person name="Qui D."/>
            <person name="Ianakiev P."/>
            <person name="Bell-Pedersen D."/>
            <person name="Nelson M.A."/>
            <person name="Werner-Washburne M."/>
            <person name="Selitrennikoff C.P."/>
            <person name="Kinsey J.A."/>
            <person name="Braun E.L."/>
            <person name="Zelter A."/>
            <person name="Schulte U."/>
            <person name="Kothe G.O."/>
            <person name="Jedd G."/>
            <person name="Mewes H.-W."/>
            <person name="Staben C."/>
            <person name="Marcotte E."/>
            <person name="Greenberg D."/>
            <person name="Roy A."/>
            <person name="Foley K."/>
            <person name="Naylor J."/>
            <person name="Stange-Thomann N."/>
            <person name="Barrett R."/>
            <person name="Gnerre S."/>
            <person name="Kamal M."/>
            <person name="Kamvysselis M."/>
            <person name="Mauceli E.W."/>
            <person name="Bielke C."/>
            <person name="Rudd S."/>
            <person name="Frishman D."/>
            <person name="Krystofova S."/>
            <person name="Rasmussen C."/>
            <person name="Metzenberg R.L."/>
            <person name="Perkins D.D."/>
            <person name="Kroken S."/>
            <person name="Cogoni C."/>
            <person name="Macino G."/>
            <person name="Catcheside D.E.A."/>
            <person name="Li W."/>
            <person name="Pratt R.J."/>
            <person name="Osmani S.A."/>
            <person name="DeSouza C.P.C."/>
            <person name="Glass N.L."/>
            <person name="Orbach M.J."/>
            <person name="Berglund J.A."/>
            <person name="Voelker R."/>
            <person name="Yarden O."/>
            <person name="Plamann M."/>
            <person name="Seiler S."/>
            <person name="Dunlap J.C."/>
            <person name="Radford A."/>
            <person name="Aramayo R."/>
            <person name="Natvig D.O."/>
            <person name="Alex L.A."/>
            <person name="Mannhaupt G."/>
            <person name="Ebbole D.J."/>
            <person name="Freitag M."/>
            <person name="Paulsen I."/>
            <person name="Sachs M.S."/>
            <person name="Lander E.S."/>
            <person name="Nusbaum C."/>
            <person name="Birren B.W."/>
        </authorList>
    </citation>
    <scope>NUCLEOTIDE SEQUENCE [LARGE SCALE GENOMIC DNA]</scope>
    <source>
        <strain>ATCC 24698 / 74-OR23-1A / CBS 708.71 / DSM 1257 / FGSC 987</strain>
    </source>
</reference>